<gene>
    <name evidence="1" type="primary">rsmH</name>
    <name type="synonym">mraW</name>
    <name type="ordered locus">OTT_1877</name>
</gene>
<comment type="function">
    <text evidence="1">Specifically methylates the N4 position of cytidine in position 1402 (C1402) of 16S rRNA.</text>
</comment>
<comment type="catalytic activity">
    <reaction evidence="1">
        <text>cytidine(1402) in 16S rRNA + S-adenosyl-L-methionine = N(4)-methylcytidine(1402) in 16S rRNA + S-adenosyl-L-homocysteine + H(+)</text>
        <dbReference type="Rhea" id="RHEA:42928"/>
        <dbReference type="Rhea" id="RHEA-COMP:10286"/>
        <dbReference type="Rhea" id="RHEA-COMP:10287"/>
        <dbReference type="ChEBI" id="CHEBI:15378"/>
        <dbReference type="ChEBI" id="CHEBI:57856"/>
        <dbReference type="ChEBI" id="CHEBI:59789"/>
        <dbReference type="ChEBI" id="CHEBI:74506"/>
        <dbReference type="ChEBI" id="CHEBI:82748"/>
        <dbReference type="EC" id="2.1.1.199"/>
    </reaction>
</comment>
<comment type="subcellular location">
    <subcellularLocation>
        <location evidence="1">Cytoplasm</location>
    </subcellularLocation>
</comment>
<comment type="similarity">
    <text evidence="1">Belongs to the methyltransferase superfamily. RsmH family.</text>
</comment>
<name>RSMH_ORITI</name>
<protein>
    <recommendedName>
        <fullName evidence="1">Ribosomal RNA small subunit methyltransferase H</fullName>
        <ecNumber evidence="1">2.1.1.199</ecNumber>
    </recommendedName>
    <alternativeName>
        <fullName evidence="1">16S rRNA m(4)C1402 methyltransferase</fullName>
    </alternativeName>
    <alternativeName>
        <fullName evidence="1">rRNA (cytosine-N(4)-)-methyltransferase RsmH</fullName>
    </alternativeName>
</protein>
<evidence type="ECO:0000255" key="1">
    <source>
        <dbReference type="HAMAP-Rule" id="MF_01007"/>
    </source>
</evidence>
<keyword id="KW-0963">Cytoplasm</keyword>
<keyword id="KW-0489">Methyltransferase</keyword>
<keyword id="KW-0698">rRNA processing</keyword>
<keyword id="KW-0949">S-adenosyl-L-methionine</keyword>
<keyword id="KW-0808">Transferase</keyword>
<reference key="1">
    <citation type="journal article" date="2008" name="DNA Res.">
        <title>The whole-genome sequencing of the obligate intracellular bacterium Orientia tsutsugamushi revealed massive gene amplification during reductive genome evolution.</title>
        <authorList>
            <person name="Nakayama K."/>
            <person name="Yamashita A."/>
            <person name="Kurokawa K."/>
            <person name="Morimoto T."/>
            <person name="Ogawa M."/>
            <person name="Fukuhara M."/>
            <person name="Urakami H."/>
            <person name="Ohnishi M."/>
            <person name="Uchiyama I."/>
            <person name="Ogura Y."/>
            <person name="Ooka T."/>
            <person name="Oshima K."/>
            <person name="Tamura A."/>
            <person name="Hattori M."/>
            <person name="Hayashi T."/>
        </authorList>
    </citation>
    <scope>NUCLEOTIDE SEQUENCE [LARGE SCALE GENOMIC DNA]</scope>
    <source>
        <strain>Ikeda</strain>
    </source>
</reference>
<sequence>MNNIHTPVLATEMLSYLAPVDNETYLDCTFGAGGYSKLILSNCNCKVIAFDRDPAVISIASQFYQQYPNRFTFFNENFVEANKYLSKLDKLNGIVMDLGVSSMQLDEANRGFSFRYDAELDMRMSQKGYKASEFVNEASEHQLADIIYKFGEENKANKIAKHIVLARKKKPITTTLQLANIIREAVGYNNYYKKNKIDSATKTFQAIRIFINDELSAIQNFLNQSLELLAVNGRLIVVSFHALEDAIIKKFMHQNAVKKVAQSKYSTNRQSPLQNGVLYLLTKKIAVPTRTEIINNPRSRSARLRAALKINE</sequence>
<organism>
    <name type="scientific">Orientia tsutsugamushi (strain Ikeda)</name>
    <name type="common">Rickettsia tsutsugamushi</name>
    <dbReference type="NCBI Taxonomy" id="334380"/>
    <lineage>
        <taxon>Bacteria</taxon>
        <taxon>Pseudomonadati</taxon>
        <taxon>Pseudomonadota</taxon>
        <taxon>Alphaproteobacteria</taxon>
        <taxon>Rickettsiales</taxon>
        <taxon>Rickettsiaceae</taxon>
        <taxon>Rickettsieae</taxon>
        <taxon>Orientia</taxon>
    </lineage>
</organism>
<dbReference type="EC" id="2.1.1.199" evidence="1"/>
<dbReference type="EMBL" id="AP008981">
    <property type="protein sequence ID" value="BAG41335.1"/>
    <property type="molecule type" value="Genomic_DNA"/>
</dbReference>
<dbReference type="SMR" id="B3CVD8"/>
<dbReference type="KEGG" id="ott:OTT_1877"/>
<dbReference type="HOGENOM" id="CLU_038422_1_1_5"/>
<dbReference type="OrthoDB" id="9806637at2"/>
<dbReference type="Proteomes" id="UP000001033">
    <property type="component" value="Chromosome"/>
</dbReference>
<dbReference type="GO" id="GO:0005737">
    <property type="term" value="C:cytoplasm"/>
    <property type="evidence" value="ECO:0007669"/>
    <property type="project" value="UniProtKB-SubCell"/>
</dbReference>
<dbReference type="GO" id="GO:0071424">
    <property type="term" value="F:rRNA (cytosine-N4-)-methyltransferase activity"/>
    <property type="evidence" value="ECO:0007669"/>
    <property type="project" value="UniProtKB-UniRule"/>
</dbReference>
<dbReference type="GO" id="GO:0070475">
    <property type="term" value="P:rRNA base methylation"/>
    <property type="evidence" value="ECO:0007669"/>
    <property type="project" value="UniProtKB-UniRule"/>
</dbReference>
<dbReference type="CDD" id="cd02440">
    <property type="entry name" value="AdoMet_MTases"/>
    <property type="match status" value="1"/>
</dbReference>
<dbReference type="Gene3D" id="1.10.150.170">
    <property type="entry name" value="Putative methyltransferase TM0872, insert domain"/>
    <property type="match status" value="1"/>
</dbReference>
<dbReference type="Gene3D" id="3.40.50.150">
    <property type="entry name" value="Vaccinia Virus protein VP39"/>
    <property type="match status" value="1"/>
</dbReference>
<dbReference type="HAMAP" id="MF_01007">
    <property type="entry name" value="16SrRNA_methyltr_H"/>
    <property type="match status" value="1"/>
</dbReference>
<dbReference type="InterPro" id="IPR002903">
    <property type="entry name" value="RsmH"/>
</dbReference>
<dbReference type="InterPro" id="IPR023397">
    <property type="entry name" value="SAM-dep_MeTrfase_MraW_recog"/>
</dbReference>
<dbReference type="InterPro" id="IPR029063">
    <property type="entry name" value="SAM-dependent_MTases_sf"/>
</dbReference>
<dbReference type="NCBIfam" id="TIGR00006">
    <property type="entry name" value="16S rRNA (cytosine(1402)-N(4))-methyltransferase RsmH"/>
    <property type="match status" value="1"/>
</dbReference>
<dbReference type="PANTHER" id="PTHR11265:SF0">
    <property type="entry name" value="12S RRNA N4-METHYLCYTIDINE METHYLTRANSFERASE"/>
    <property type="match status" value="1"/>
</dbReference>
<dbReference type="PANTHER" id="PTHR11265">
    <property type="entry name" value="S-ADENOSYL-METHYLTRANSFERASE MRAW"/>
    <property type="match status" value="1"/>
</dbReference>
<dbReference type="Pfam" id="PF01795">
    <property type="entry name" value="Methyltransf_5"/>
    <property type="match status" value="1"/>
</dbReference>
<dbReference type="PIRSF" id="PIRSF004486">
    <property type="entry name" value="MraW"/>
    <property type="match status" value="1"/>
</dbReference>
<dbReference type="SUPFAM" id="SSF81799">
    <property type="entry name" value="Putative methyltransferase TM0872, insert domain"/>
    <property type="match status" value="1"/>
</dbReference>
<dbReference type="SUPFAM" id="SSF53335">
    <property type="entry name" value="S-adenosyl-L-methionine-dependent methyltransferases"/>
    <property type="match status" value="1"/>
</dbReference>
<proteinExistence type="inferred from homology"/>
<feature type="chain" id="PRO_0000387018" description="Ribosomal RNA small subunit methyltransferase H">
    <location>
        <begin position="1"/>
        <end position="312"/>
    </location>
</feature>
<feature type="binding site" evidence="1">
    <location>
        <begin position="33"/>
        <end position="35"/>
    </location>
    <ligand>
        <name>S-adenosyl-L-methionine</name>
        <dbReference type="ChEBI" id="CHEBI:59789"/>
    </ligand>
</feature>
<feature type="binding site" evidence="1">
    <location>
        <position position="51"/>
    </location>
    <ligand>
        <name>S-adenosyl-L-methionine</name>
        <dbReference type="ChEBI" id="CHEBI:59789"/>
    </ligand>
</feature>
<feature type="binding site" evidence="1">
    <location>
        <position position="78"/>
    </location>
    <ligand>
        <name>S-adenosyl-L-methionine</name>
        <dbReference type="ChEBI" id="CHEBI:59789"/>
    </ligand>
</feature>
<feature type="binding site" evidence="1">
    <location>
        <position position="97"/>
    </location>
    <ligand>
        <name>S-adenosyl-L-methionine</name>
        <dbReference type="ChEBI" id="CHEBI:59789"/>
    </ligand>
</feature>
<feature type="binding site" evidence="1">
    <location>
        <position position="104"/>
    </location>
    <ligand>
        <name>S-adenosyl-L-methionine</name>
        <dbReference type="ChEBI" id="CHEBI:59789"/>
    </ligand>
</feature>
<accession>B3CVD8</accession>